<comment type="similarity">
    <text evidence="2">Belongs to the eukaryotic ribosomal protein eL33 family.</text>
</comment>
<gene>
    <name type="primary">RPL35AD</name>
    <name type="ordered locus">At3g55750</name>
    <name type="ORF">F1I16_160</name>
</gene>
<name>R35A4_ARATH</name>
<feature type="chain" id="PRO_0000192804" description="Large ribosomal subunit protein eL33x">
    <location>
        <begin position="1"/>
        <end position="111"/>
    </location>
</feature>
<dbReference type="EMBL" id="AL161667">
    <property type="protein sequence ID" value="CAB81600.1"/>
    <property type="molecule type" value="Genomic_DNA"/>
</dbReference>
<dbReference type="EMBL" id="CP002686">
    <property type="protein sequence ID" value="AEE79430.1"/>
    <property type="molecule type" value="Genomic_DNA"/>
</dbReference>
<dbReference type="EMBL" id="AF446895">
    <property type="protein sequence ID" value="AAL38628.1"/>
    <property type="molecule type" value="mRNA"/>
</dbReference>
<dbReference type="EMBL" id="AY052680">
    <property type="protein sequence ID" value="AAK96584.1"/>
    <property type="molecule type" value="mRNA"/>
</dbReference>
<dbReference type="EMBL" id="AY087646">
    <property type="protein sequence ID" value="AAM65184.1"/>
    <property type="molecule type" value="mRNA"/>
</dbReference>
<dbReference type="EMBL" id="Z18517">
    <property type="protein sequence ID" value="CAA79213.1"/>
    <property type="molecule type" value="mRNA"/>
</dbReference>
<dbReference type="PIR" id="T47714">
    <property type="entry name" value="T47714"/>
</dbReference>
<dbReference type="RefSeq" id="NP_191134.1">
    <property type="nucleotide sequence ID" value="NM_115433.4"/>
</dbReference>
<dbReference type="SMR" id="P51422"/>
<dbReference type="FunCoup" id="P51422">
    <property type="interactions" value="2711"/>
</dbReference>
<dbReference type="STRING" id="3702.P51422"/>
<dbReference type="PaxDb" id="3702-AT3G55750.1"/>
<dbReference type="EnsemblPlants" id="AT3G55750.1">
    <property type="protein sequence ID" value="AT3G55750.1"/>
    <property type="gene ID" value="AT3G55750"/>
</dbReference>
<dbReference type="GeneID" id="824741"/>
<dbReference type="Gramene" id="AT3G55750.1">
    <property type="protein sequence ID" value="AT3G55750.1"/>
    <property type="gene ID" value="AT3G55750"/>
</dbReference>
<dbReference type="KEGG" id="ath:AT3G55750"/>
<dbReference type="Araport" id="AT3G55750"/>
<dbReference type="TAIR" id="AT3G55750"/>
<dbReference type="eggNOG" id="KOG0887">
    <property type="taxonomic scope" value="Eukaryota"/>
</dbReference>
<dbReference type="HOGENOM" id="CLU_100745_2_0_1"/>
<dbReference type="InParanoid" id="P51422"/>
<dbReference type="OMA" id="HRIHAML"/>
<dbReference type="OrthoDB" id="1023925at2759"/>
<dbReference type="PhylomeDB" id="P51422"/>
<dbReference type="CD-CODE" id="4299E36E">
    <property type="entry name" value="Nucleolus"/>
</dbReference>
<dbReference type="PRO" id="PR:P51422"/>
<dbReference type="Proteomes" id="UP000006548">
    <property type="component" value="Chromosome 3"/>
</dbReference>
<dbReference type="ExpressionAtlas" id="P51422">
    <property type="expression patterns" value="baseline and differential"/>
</dbReference>
<dbReference type="GO" id="GO:0005829">
    <property type="term" value="C:cytosol"/>
    <property type="evidence" value="ECO:0007005"/>
    <property type="project" value="TAIR"/>
</dbReference>
<dbReference type="GO" id="GO:0022625">
    <property type="term" value="C:cytosolic large ribosomal subunit"/>
    <property type="evidence" value="ECO:0007005"/>
    <property type="project" value="TAIR"/>
</dbReference>
<dbReference type="GO" id="GO:0022626">
    <property type="term" value="C:cytosolic ribosome"/>
    <property type="evidence" value="ECO:0007005"/>
    <property type="project" value="TAIR"/>
</dbReference>
<dbReference type="GO" id="GO:0003729">
    <property type="term" value="F:mRNA binding"/>
    <property type="evidence" value="ECO:0000314"/>
    <property type="project" value="TAIR"/>
</dbReference>
<dbReference type="GO" id="GO:0003735">
    <property type="term" value="F:structural constituent of ribosome"/>
    <property type="evidence" value="ECO:0000314"/>
    <property type="project" value="CAFA"/>
</dbReference>
<dbReference type="GO" id="GO:0006412">
    <property type="term" value="P:translation"/>
    <property type="evidence" value="ECO:0007669"/>
    <property type="project" value="InterPro"/>
</dbReference>
<dbReference type="FunFam" id="2.40.10.190:FF:000001">
    <property type="entry name" value="60S ribosomal protein L35a"/>
    <property type="match status" value="1"/>
</dbReference>
<dbReference type="Gene3D" id="2.40.10.190">
    <property type="entry name" value="translation elongation factor selb, chain A, domain 4"/>
    <property type="match status" value="1"/>
</dbReference>
<dbReference type="HAMAP" id="MF_00573">
    <property type="entry name" value="Ribosomal_eL33"/>
    <property type="match status" value="1"/>
</dbReference>
<dbReference type="InterPro" id="IPR001780">
    <property type="entry name" value="Ribosomal_eL33"/>
</dbReference>
<dbReference type="InterPro" id="IPR018266">
    <property type="entry name" value="Ribosomal_eL33_CS"/>
</dbReference>
<dbReference type="InterPro" id="IPR038661">
    <property type="entry name" value="Ribosomal_eL33_sf"/>
</dbReference>
<dbReference type="InterPro" id="IPR009000">
    <property type="entry name" value="Transl_B-barrel_sf"/>
</dbReference>
<dbReference type="PANTHER" id="PTHR10902">
    <property type="entry name" value="60S RIBOSOMAL PROTEIN L35A"/>
    <property type="match status" value="1"/>
</dbReference>
<dbReference type="Pfam" id="PF01247">
    <property type="entry name" value="Ribosomal_L35Ae"/>
    <property type="match status" value="1"/>
</dbReference>
<dbReference type="SUPFAM" id="SSF50447">
    <property type="entry name" value="Translation proteins"/>
    <property type="match status" value="1"/>
</dbReference>
<dbReference type="PROSITE" id="PS01105">
    <property type="entry name" value="RIBOSOMAL_L35AE"/>
    <property type="match status" value="1"/>
</dbReference>
<organism>
    <name type="scientific">Arabidopsis thaliana</name>
    <name type="common">Mouse-ear cress</name>
    <dbReference type="NCBI Taxonomy" id="3702"/>
    <lineage>
        <taxon>Eukaryota</taxon>
        <taxon>Viridiplantae</taxon>
        <taxon>Streptophyta</taxon>
        <taxon>Embryophyta</taxon>
        <taxon>Tracheophyta</taxon>
        <taxon>Spermatophyta</taxon>
        <taxon>Magnoliopsida</taxon>
        <taxon>eudicotyledons</taxon>
        <taxon>Gunneridae</taxon>
        <taxon>Pentapetalae</taxon>
        <taxon>rosids</taxon>
        <taxon>malvids</taxon>
        <taxon>Brassicales</taxon>
        <taxon>Brassicaceae</taxon>
        <taxon>Camelineae</taxon>
        <taxon>Arabidopsis</taxon>
    </lineage>
</organism>
<proteinExistence type="inferred from homology"/>
<reference key="1">
    <citation type="journal article" date="2000" name="Nature">
        <title>Sequence and analysis of chromosome 3 of the plant Arabidopsis thaliana.</title>
        <authorList>
            <person name="Salanoubat M."/>
            <person name="Lemcke K."/>
            <person name="Rieger M."/>
            <person name="Ansorge W."/>
            <person name="Unseld M."/>
            <person name="Fartmann B."/>
            <person name="Valle G."/>
            <person name="Bloecker H."/>
            <person name="Perez-Alonso M."/>
            <person name="Obermaier B."/>
            <person name="Delseny M."/>
            <person name="Boutry M."/>
            <person name="Grivell L.A."/>
            <person name="Mache R."/>
            <person name="Puigdomenech P."/>
            <person name="De Simone V."/>
            <person name="Choisne N."/>
            <person name="Artiguenave F."/>
            <person name="Robert C."/>
            <person name="Brottier P."/>
            <person name="Wincker P."/>
            <person name="Cattolico L."/>
            <person name="Weissenbach J."/>
            <person name="Saurin W."/>
            <person name="Quetier F."/>
            <person name="Schaefer M."/>
            <person name="Mueller-Auer S."/>
            <person name="Gabel C."/>
            <person name="Fuchs M."/>
            <person name="Benes V."/>
            <person name="Wurmbach E."/>
            <person name="Drzonek H."/>
            <person name="Erfle H."/>
            <person name="Jordan N."/>
            <person name="Bangert S."/>
            <person name="Wiedelmann R."/>
            <person name="Kranz H."/>
            <person name="Voss H."/>
            <person name="Holland R."/>
            <person name="Brandt P."/>
            <person name="Nyakatura G."/>
            <person name="Vezzi A."/>
            <person name="D'Angelo M."/>
            <person name="Pallavicini A."/>
            <person name="Toppo S."/>
            <person name="Simionati B."/>
            <person name="Conrad A."/>
            <person name="Hornischer K."/>
            <person name="Kauer G."/>
            <person name="Loehnert T.-H."/>
            <person name="Nordsiek G."/>
            <person name="Reichelt J."/>
            <person name="Scharfe M."/>
            <person name="Schoen O."/>
            <person name="Bargues M."/>
            <person name="Terol J."/>
            <person name="Climent J."/>
            <person name="Navarro P."/>
            <person name="Collado C."/>
            <person name="Perez-Perez A."/>
            <person name="Ottenwaelder B."/>
            <person name="Duchemin D."/>
            <person name="Cooke R."/>
            <person name="Laudie M."/>
            <person name="Berger-Llauro C."/>
            <person name="Purnelle B."/>
            <person name="Masuy D."/>
            <person name="de Haan M."/>
            <person name="Maarse A.C."/>
            <person name="Alcaraz J.-P."/>
            <person name="Cottet A."/>
            <person name="Casacuberta E."/>
            <person name="Monfort A."/>
            <person name="Argiriou A."/>
            <person name="Flores M."/>
            <person name="Liguori R."/>
            <person name="Vitale D."/>
            <person name="Mannhaupt G."/>
            <person name="Haase D."/>
            <person name="Schoof H."/>
            <person name="Rudd S."/>
            <person name="Zaccaria P."/>
            <person name="Mewes H.-W."/>
            <person name="Mayer K.F.X."/>
            <person name="Kaul S."/>
            <person name="Town C.D."/>
            <person name="Koo H.L."/>
            <person name="Tallon L.J."/>
            <person name="Jenkins J."/>
            <person name="Rooney T."/>
            <person name="Rizzo M."/>
            <person name="Walts A."/>
            <person name="Utterback T."/>
            <person name="Fujii C.Y."/>
            <person name="Shea T.P."/>
            <person name="Creasy T.H."/>
            <person name="Haas B."/>
            <person name="Maiti R."/>
            <person name="Wu D."/>
            <person name="Peterson J."/>
            <person name="Van Aken S."/>
            <person name="Pai G."/>
            <person name="Militscher J."/>
            <person name="Sellers P."/>
            <person name="Gill J.E."/>
            <person name="Feldblyum T.V."/>
            <person name="Preuss D."/>
            <person name="Lin X."/>
            <person name="Nierman W.C."/>
            <person name="Salzberg S.L."/>
            <person name="White O."/>
            <person name="Venter J.C."/>
            <person name="Fraser C.M."/>
            <person name="Kaneko T."/>
            <person name="Nakamura Y."/>
            <person name="Sato S."/>
            <person name="Kato T."/>
            <person name="Asamizu E."/>
            <person name="Sasamoto S."/>
            <person name="Kimura T."/>
            <person name="Idesawa K."/>
            <person name="Kawashima K."/>
            <person name="Kishida Y."/>
            <person name="Kiyokawa C."/>
            <person name="Kohara M."/>
            <person name="Matsumoto M."/>
            <person name="Matsuno A."/>
            <person name="Muraki A."/>
            <person name="Nakayama S."/>
            <person name="Nakazaki N."/>
            <person name="Shinpo S."/>
            <person name="Takeuchi C."/>
            <person name="Wada T."/>
            <person name="Watanabe A."/>
            <person name="Yamada M."/>
            <person name="Yasuda M."/>
            <person name="Tabata S."/>
        </authorList>
    </citation>
    <scope>NUCLEOTIDE SEQUENCE [LARGE SCALE GENOMIC DNA]</scope>
    <source>
        <strain>cv. Columbia</strain>
    </source>
</reference>
<reference key="2">
    <citation type="journal article" date="2017" name="Plant J.">
        <title>Araport11: a complete reannotation of the Arabidopsis thaliana reference genome.</title>
        <authorList>
            <person name="Cheng C.Y."/>
            <person name="Krishnakumar V."/>
            <person name="Chan A.P."/>
            <person name="Thibaud-Nissen F."/>
            <person name="Schobel S."/>
            <person name="Town C.D."/>
        </authorList>
    </citation>
    <scope>GENOME REANNOTATION</scope>
    <source>
        <strain>cv. Columbia</strain>
    </source>
</reference>
<reference key="3">
    <citation type="journal article" date="2003" name="Science">
        <title>Empirical analysis of transcriptional activity in the Arabidopsis genome.</title>
        <authorList>
            <person name="Yamada K."/>
            <person name="Lim J."/>
            <person name="Dale J.M."/>
            <person name="Chen H."/>
            <person name="Shinn P."/>
            <person name="Palm C.J."/>
            <person name="Southwick A.M."/>
            <person name="Wu H.C."/>
            <person name="Kim C.J."/>
            <person name="Nguyen M."/>
            <person name="Pham P.K."/>
            <person name="Cheuk R.F."/>
            <person name="Karlin-Newmann G."/>
            <person name="Liu S.X."/>
            <person name="Lam B."/>
            <person name="Sakano H."/>
            <person name="Wu T."/>
            <person name="Yu G."/>
            <person name="Miranda M."/>
            <person name="Quach H.L."/>
            <person name="Tripp M."/>
            <person name="Chang C.H."/>
            <person name="Lee J.M."/>
            <person name="Toriumi M.J."/>
            <person name="Chan M.M."/>
            <person name="Tang C.C."/>
            <person name="Onodera C.S."/>
            <person name="Deng J.M."/>
            <person name="Akiyama K."/>
            <person name="Ansari Y."/>
            <person name="Arakawa T."/>
            <person name="Banh J."/>
            <person name="Banno F."/>
            <person name="Bowser L."/>
            <person name="Brooks S.Y."/>
            <person name="Carninci P."/>
            <person name="Chao Q."/>
            <person name="Choy N."/>
            <person name="Enju A."/>
            <person name="Goldsmith A.D."/>
            <person name="Gurjal M."/>
            <person name="Hansen N.F."/>
            <person name="Hayashizaki Y."/>
            <person name="Johnson-Hopson C."/>
            <person name="Hsuan V.W."/>
            <person name="Iida K."/>
            <person name="Karnes M."/>
            <person name="Khan S."/>
            <person name="Koesema E."/>
            <person name="Ishida J."/>
            <person name="Jiang P.X."/>
            <person name="Jones T."/>
            <person name="Kawai J."/>
            <person name="Kamiya A."/>
            <person name="Meyers C."/>
            <person name="Nakajima M."/>
            <person name="Narusaka M."/>
            <person name="Seki M."/>
            <person name="Sakurai T."/>
            <person name="Satou M."/>
            <person name="Tamse R."/>
            <person name="Vaysberg M."/>
            <person name="Wallender E.K."/>
            <person name="Wong C."/>
            <person name="Yamamura Y."/>
            <person name="Yuan S."/>
            <person name="Shinozaki K."/>
            <person name="Davis R.W."/>
            <person name="Theologis A."/>
            <person name="Ecker J.R."/>
        </authorList>
    </citation>
    <scope>NUCLEOTIDE SEQUENCE [LARGE SCALE MRNA]</scope>
    <source>
        <strain>cv. Columbia</strain>
    </source>
</reference>
<reference key="4">
    <citation type="submission" date="2002-03" db="EMBL/GenBank/DDBJ databases">
        <title>Full-length cDNA from Arabidopsis thaliana.</title>
        <authorList>
            <person name="Brover V.V."/>
            <person name="Troukhan M.E."/>
            <person name="Alexandrov N.A."/>
            <person name="Lu Y.-P."/>
            <person name="Flavell R.B."/>
            <person name="Feldmann K.A."/>
        </authorList>
    </citation>
    <scope>NUCLEOTIDE SEQUENCE [LARGE SCALE MRNA]</scope>
</reference>
<reference key="5">
    <citation type="journal article" date="1993" name="Plant J.">
        <title>An inventory of 1152 expressed sequence tags obtained by partial sequencing of cDNAs from Arabidopsis thaliana.</title>
        <authorList>
            <person name="Hoefte H."/>
            <person name="Desprez T."/>
            <person name="Amselem J."/>
            <person name="Chiapello H."/>
            <person name="Rouze P."/>
            <person name="Caboche M."/>
            <person name="Moisan A."/>
            <person name="Jourjon M.-F."/>
            <person name="Charpenteau J.-L."/>
            <person name="Berthomieu P."/>
            <person name="Guerrier D."/>
            <person name="Giraudat J."/>
            <person name="Quigley F."/>
            <person name="Thomas F."/>
            <person name="Yu D.-Y."/>
            <person name="Mache R."/>
            <person name="Raynal M."/>
            <person name="Cooke R."/>
            <person name="Grellet F."/>
            <person name="Delseny M."/>
            <person name="Parmentier Y."/>
            <person name="de Marcillac G."/>
            <person name="Gigot C."/>
            <person name="Fleck J."/>
            <person name="Philipps G."/>
            <person name="Axelos M."/>
            <person name="Bardet C."/>
            <person name="Tremousaygue D."/>
            <person name="Lescure B."/>
        </authorList>
    </citation>
    <scope>NUCLEOTIDE SEQUENCE [LARGE SCALE MRNA] OF 1-50</scope>
    <source>
        <strain>cv. Columbia</strain>
    </source>
</reference>
<reference key="6">
    <citation type="journal article" date="2001" name="Plant Physiol.">
        <title>The organization of cytoplasmic ribosomal protein genes in the Arabidopsis genome.</title>
        <authorList>
            <person name="Barakat A."/>
            <person name="Szick-Miranda K."/>
            <person name="Chang I.-F."/>
            <person name="Guyot R."/>
            <person name="Blanc G."/>
            <person name="Cooke R."/>
            <person name="Delseny M."/>
            <person name="Bailey-Serres J."/>
        </authorList>
    </citation>
    <scope>GENE FAMILY ORGANIZATION</scope>
    <scope>NOMENCLATURE</scope>
</reference>
<reference key="7">
    <citation type="journal article" date="2023" name="Plant Cell">
        <title>An updated nomenclature for plant ribosomal protein genes.</title>
        <authorList>
            <person name="Scarpin M.R."/>
            <person name="Busche M."/>
            <person name="Martinez R.E."/>
            <person name="Harper L.C."/>
            <person name="Reiser L."/>
            <person name="Szakonyi D."/>
            <person name="Merchante C."/>
            <person name="Lan T."/>
            <person name="Xiong W."/>
            <person name="Mo B."/>
            <person name="Tang G."/>
            <person name="Chen X."/>
            <person name="Bailey-Serres J."/>
            <person name="Browning K.S."/>
            <person name="Brunkard J.O."/>
        </authorList>
    </citation>
    <scope>NOMENCLATURE</scope>
</reference>
<evidence type="ECO:0000303" key="1">
    <source>
    </source>
</evidence>
<evidence type="ECO:0000305" key="2"/>
<sequence length="111" mass="12785">MKGRQGERVRLYVRGTVLGYKRSKSNQYPNTSLVQIEGVNTQEEVNWYKGKRLAYIYKAKTKKNGSHYRCIWGKVTRPHGNSGVVRSKFTSNLPPKSMGARVRVFMYPSNI</sequence>
<accession>P51422</accession>
<accession>Q9M049</accession>
<protein>
    <recommendedName>
        <fullName evidence="1">Large ribosomal subunit protein eL33x</fullName>
    </recommendedName>
    <alternativeName>
        <fullName>60S ribosomal protein L35a-4</fullName>
    </alternativeName>
</protein>
<keyword id="KW-1185">Reference proteome</keyword>
<keyword id="KW-0687">Ribonucleoprotein</keyword>
<keyword id="KW-0689">Ribosomal protein</keyword>